<gene>
    <name evidence="1" type="primary">recR</name>
    <name type="ordered locus">FP1300</name>
</gene>
<protein>
    <recommendedName>
        <fullName evidence="1">Recombination protein RecR</fullName>
    </recommendedName>
</protein>
<reference key="1">
    <citation type="journal article" date="2007" name="Nat. Biotechnol.">
        <title>Complete genome sequence of the fish pathogen Flavobacterium psychrophilum.</title>
        <authorList>
            <person name="Duchaud E."/>
            <person name="Boussaha M."/>
            <person name="Loux V."/>
            <person name="Bernardet J.-F."/>
            <person name="Michel C."/>
            <person name="Kerouault B."/>
            <person name="Mondot S."/>
            <person name="Nicolas P."/>
            <person name="Bossy R."/>
            <person name="Caron C."/>
            <person name="Bessieres P."/>
            <person name="Gibrat J.-F."/>
            <person name="Claverol S."/>
            <person name="Dumetz F."/>
            <person name="Le Henaff M."/>
            <person name="Benmansour A."/>
        </authorList>
    </citation>
    <scope>NUCLEOTIDE SEQUENCE [LARGE SCALE GENOMIC DNA]</scope>
    <source>
        <strain>ATCC 49511 / DSM 21280 / CIP 103535 / JIP02/86</strain>
    </source>
</reference>
<proteinExistence type="inferred from homology"/>
<feature type="chain" id="PRO_0000322890" description="Recombination protein RecR">
    <location>
        <begin position="1"/>
        <end position="206"/>
    </location>
</feature>
<feature type="domain" description="Toprim" evidence="1">
    <location>
        <begin position="81"/>
        <end position="176"/>
    </location>
</feature>
<feature type="zinc finger region" description="C4-type" evidence="1">
    <location>
        <begin position="58"/>
        <end position="73"/>
    </location>
</feature>
<accession>A6GZ60</accession>
<keyword id="KW-0227">DNA damage</keyword>
<keyword id="KW-0233">DNA recombination</keyword>
<keyword id="KW-0234">DNA repair</keyword>
<keyword id="KW-0479">Metal-binding</keyword>
<keyword id="KW-1185">Reference proteome</keyword>
<keyword id="KW-0862">Zinc</keyword>
<keyword id="KW-0863">Zinc-finger</keyword>
<evidence type="ECO:0000255" key="1">
    <source>
        <dbReference type="HAMAP-Rule" id="MF_00017"/>
    </source>
</evidence>
<sequence>MEFSSKLLEKAVNEMAQLPGIGKRTALRLVLYLLKQPKDRTDFLAQSLLTMREGIIFCENCHNISDVAVCEICSNKNRNHQIVCVVEDVRDVMAIENTGQFRGVYHVLGGKISPIDGVGPSQLNISSLVEKVKSGSVSEIIFALSSTMEGDTTNFYIYKQIKDCEIITSSIARGISVGDELEYADEVTLGRSILNRIPFENSFKNN</sequence>
<comment type="function">
    <text evidence="1">May play a role in DNA repair. It seems to be involved in an RecBC-independent recombinational process of DNA repair. It may act with RecF and RecO.</text>
</comment>
<comment type="similarity">
    <text evidence="1">Belongs to the RecR family.</text>
</comment>
<dbReference type="EMBL" id="AM398681">
    <property type="protein sequence ID" value="CAL43383.1"/>
    <property type="molecule type" value="Genomic_DNA"/>
</dbReference>
<dbReference type="RefSeq" id="WP_011963432.1">
    <property type="nucleotide sequence ID" value="NC_009613.3"/>
</dbReference>
<dbReference type="RefSeq" id="YP_001296194.1">
    <property type="nucleotide sequence ID" value="NC_009613.3"/>
</dbReference>
<dbReference type="SMR" id="A6GZ60"/>
<dbReference type="STRING" id="402612.FP1300"/>
<dbReference type="EnsemblBacteria" id="CAL43383">
    <property type="protein sequence ID" value="CAL43383"/>
    <property type="gene ID" value="FP1300"/>
</dbReference>
<dbReference type="GeneID" id="66553205"/>
<dbReference type="KEGG" id="fps:FP1300"/>
<dbReference type="PATRIC" id="fig|402612.5.peg.1317"/>
<dbReference type="eggNOG" id="COG0353">
    <property type="taxonomic scope" value="Bacteria"/>
</dbReference>
<dbReference type="HOGENOM" id="CLU_060739_1_1_10"/>
<dbReference type="OrthoDB" id="9802672at2"/>
<dbReference type="Proteomes" id="UP000006394">
    <property type="component" value="Chromosome"/>
</dbReference>
<dbReference type="GO" id="GO:0003677">
    <property type="term" value="F:DNA binding"/>
    <property type="evidence" value="ECO:0007669"/>
    <property type="project" value="UniProtKB-UniRule"/>
</dbReference>
<dbReference type="GO" id="GO:0008270">
    <property type="term" value="F:zinc ion binding"/>
    <property type="evidence" value="ECO:0007669"/>
    <property type="project" value="UniProtKB-KW"/>
</dbReference>
<dbReference type="GO" id="GO:0006310">
    <property type="term" value="P:DNA recombination"/>
    <property type="evidence" value="ECO:0007669"/>
    <property type="project" value="UniProtKB-UniRule"/>
</dbReference>
<dbReference type="GO" id="GO:0006281">
    <property type="term" value="P:DNA repair"/>
    <property type="evidence" value="ECO:0007669"/>
    <property type="project" value="UniProtKB-UniRule"/>
</dbReference>
<dbReference type="CDD" id="cd01025">
    <property type="entry name" value="TOPRIM_recR"/>
    <property type="match status" value="1"/>
</dbReference>
<dbReference type="Gene3D" id="3.40.1360.10">
    <property type="match status" value="1"/>
</dbReference>
<dbReference type="Gene3D" id="6.10.250.240">
    <property type="match status" value="1"/>
</dbReference>
<dbReference type="Gene3D" id="1.10.8.420">
    <property type="entry name" value="RecR Domain 1"/>
    <property type="match status" value="1"/>
</dbReference>
<dbReference type="HAMAP" id="MF_00017">
    <property type="entry name" value="RecR"/>
    <property type="match status" value="1"/>
</dbReference>
<dbReference type="InterPro" id="IPR000093">
    <property type="entry name" value="DNA_Rcmb_RecR"/>
</dbReference>
<dbReference type="InterPro" id="IPR023627">
    <property type="entry name" value="Rcmb_RecR"/>
</dbReference>
<dbReference type="InterPro" id="IPR015967">
    <property type="entry name" value="Rcmb_RecR_Znf"/>
</dbReference>
<dbReference type="InterPro" id="IPR006171">
    <property type="entry name" value="TOPRIM_dom"/>
</dbReference>
<dbReference type="InterPro" id="IPR034137">
    <property type="entry name" value="TOPRIM_RecR"/>
</dbReference>
<dbReference type="NCBIfam" id="TIGR00615">
    <property type="entry name" value="recR"/>
    <property type="match status" value="1"/>
</dbReference>
<dbReference type="PANTHER" id="PTHR30446">
    <property type="entry name" value="RECOMBINATION PROTEIN RECR"/>
    <property type="match status" value="1"/>
</dbReference>
<dbReference type="PANTHER" id="PTHR30446:SF0">
    <property type="entry name" value="RECOMBINATION PROTEIN RECR"/>
    <property type="match status" value="1"/>
</dbReference>
<dbReference type="Pfam" id="PF21175">
    <property type="entry name" value="RecR_C"/>
    <property type="match status" value="1"/>
</dbReference>
<dbReference type="Pfam" id="PF21176">
    <property type="entry name" value="RecR_HhH"/>
    <property type="match status" value="1"/>
</dbReference>
<dbReference type="Pfam" id="PF02132">
    <property type="entry name" value="RecR_ZnF"/>
    <property type="match status" value="1"/>
</dbReference>
<dbReference type="Pfam" id="PF13662">
    <property type="entry name" value="Toprim_4"/>
    <property type="match status" value="1"/>
</dbReference>
<dbReference type="SMART" id="SM00493">
    <property type="entry name" value="TOPRIM"/>
    <property type="match status" value="1"/>
</dbReference>
<dbReference type="SUPFAM" id="SSF111304">
    <property type="entry name" value="Recombination protein RecR"/>
    <property type="match status" value="1"/>
</dbReference>
<dbReference type="PROSITE" id="PS01300">
    <property type="entry name" value="RECR"/>
    <property type="match status" value="1"/>
</dbReference>
<dbReference type="PROSITE" id="PS50880">
    <property type="entry name" value="TOPRIM"/>
    <property type="match status" value="1"/>
</dbReference>
<name>RECR_FLAPJ</name>
<organism>
    <name type="scientific">Flavobacterium psychrophilum (strain ATCC 49511 / DSM 21280 / CIP 103535 / JIP02/86)</name>
    <dbReference type="NCBI Taxonomy" id="402612"/>
    <lineage>
        <taxon>Bacteria</taxon>
        <taxon>Pseudomonadati</taxon>
        <taxon>Bacteroidota</taxon>
        <taxon>Flavobacteriia</taxon>
        <taxon>Flavobacteriales</taxon>
        <taxon>Flavobacteriaceae</taxon>
        <taxon>Flavobacterium</taxon>
    </lineage>
</organism>